<gene>
    <name evidence="1" type="primary">gpmI</name>
    <name type="ordered locus">BCE33L4825</name>
</gene>
<proteinExistence type="inferred from homology"/>
<sequence length="509" mass="56353">MRKPTALIILDGFGLREETYGNAVAQAKKPNFDGYWNKFPHTTLTACGEAVGLPEGQMGNSEVGHLNIGAGRIVYQSLTRVNVAIREGEFDKNETFQSAIKSVKEKGTALHLFGLLSDGGVHSHMNHMFALLRLAAKEGVEKVYIHAFLDGRDVGPKTAQSYIDATNEVIKETGVGQFATISGRYYSMDRDKRWDRVEKCYRAMVNGEGPTYKSAEECVEDSYANGIYDEFVLPSVIVNEDNTPVATINDDDAVIFYNFRPDRAIQIARVFTNEDFREFDRGEKVPHIPEFVCMTHFSETVDGYVAFKPMNLDNTLGEVVAQAGLKQLRIAETEKYPHVTFFFSGGREAEFPGEERILINSPKVATYDLKPEMSIYEVTDALVNEIENDKHDVIILNFANCDMVGHSGMMEPTIKAVEATDECLGKVVEAILAKDGVALITADHGNADEELTSEGEPMTAHTTNPVPFIVTKNDVELREDGILGDIAPTMLTLLGVEQPKEMTGKTIIK</sequence>
<reference key="1">
    <citation type="journal article" date="2006" name="J. Bacteriol.">
        <title>Pathogenomic sequence analysis of Bacillus cereus and Bacillus thuringiensis isolates closely related to Bacillus anthracis.</title>
        <authorList>
            <person name="Han C.S."/>
            <person name="Xie G."/>
            <person name="Challacombe J.F."/>
            <person name="Altherr M.R."/>
            <person name="Bhotika S.S."/>
            <person name="Bruce D."/>
            <person name="Campbell C.S."/>
            <person name="Campbell M.L."/>
            <person name="Chen J."/>
            <person name="Chertkov O."/>
            <person name="Cleland C."/>
            <person name="Dimitrijevic M."/>
            <person name="Doggett N.A."/>
            <person name="Fawcett J.J."/>
            <person name="Glavina T."/>
            <person name="Goodwin L.A."/>
            <person name="Hill K.K."/>
            <person name="Hitchcock P."/>
            <person name="Jackson P.J."/>
            <person name="Keim P."/>
            <person name="Kewalramani A.R."/>
            <person name="Longmire J."/>
            <person name="Lucas S."/>
            <person name="Malfatti S."/>
            <person name="McMurry K."/>
            <person name="Meincke L.J."/>
            <person name="Misra M."/>
            <person name="Moseman B.L."/>
            <person name="Mundt M."/>
            <person name="Munk A.C."/>
            <person name="Okinaka R.T."/>
            <person name="Parson-Quintana B."/>
            <person name="Reilly L.P."/>
            <person name="Richardson P."/>
            <person name="Robinson D.L."/>
            <person name="Rubin E."/>
            <person name="Saunders E."/>
            <person name="Tapia R."/>
            <person name="Tesmer J.G."/>
            <person name="Thayer N."/>
            <person name="Thompson L.S."/>
            <person name="Tice H."/>
            <person name="Ticknor L.O."/>
            <person name="Wills P.L."/>
            <person name="Brettin T.S."/>
            <person name="Gilna P."/>
        </authorList>
    </citation>
    <scope>NUCLEOTIDE SEQUENCE [LARGE SCALE GENOMIC DNA]</scope>
    <source>
        <strain>ZK / E33L</strain>
    </source>
</reference>
<organism>
    <name type="scientific">Bacillus cereus (strain ZK / E33L)</name>
    <dbReference type="NCBI Taxonomy" id="288681"/>
    <lineage>
        <taxon>Bacteria</taxon>
        <taxon>Bacillati</taxon>
        <taxon>Bacillota</taxon>
        <taxon>Bacilli</taxon>
        <taxon>Bacillales</taxon>
        <taxon>Bacillaceae</taxon>
        <taxon>Bacillus</taxon>
        <taxon>Bacillus cereus group</taxon>
    </lineage>
</organism>
<name>GPMI_BACCZ</name>
<dbReference type="EC" id="5.4.2.12" evidence="1"/>
<dbReference type="EMBL" id="CP000001">
    <property type="protein sequence ID" value="AAU15452.1"/>
    <property type="molecule type" value="Genomic_DNA"/>
</dbReference>
<dbReference type="RefSeq" id="WP_001231152.1">
    <property type="nucleotide sequence ID" value="NZ_CP009968.1"/>
</dbReference>
<dbReference type="SMR" id="Q631M1"/>
<dbReference type="GeneID" id="93005984"/>
<dbReference type="KEGG" id="bcz:BCE33L4825"/>
<dbReference type="PATRIC" id="fig|288681.22.peg.528"/>
<dbReference type="UniPathway" id="UPA00109">
    <property type="reaction ID" value="UER00186"/>
</dbReference>
<dbReference type="Proteomes" id="UP000002612">
    <property type="component" value="Chromosome"/>
</dbReference>
<dbReference type="GO" id="GO:0005829">
    <property type="term" value="C:cytosol"/>
    <property type="evidence" value="ECO:0007669"/>
    <property type="project" value="TreeGrafter"/>
</dbReference>
<dbReference type="GO" id="GO:0030145">
    <property type="term" value="F:manganese ion binding"/>
    <property type="evidence" value="ECO:0007669"/>
    <property type="project" value="UniProtKB-UniRule"/>
</dbReference>
<dbReference type="GO" id="GO:0004619">
    <property type="term" value="F:phosphoglycerate mutase activity"/>
    <property type="evidence" value="ECO:0007669"/>
    <property type="project" value="UniProtKB-EC"/>
</dbReference>
<dbReference type="GO" id="GO:0006007">
    <property type="term" value="P:glucose catabolic process"/>
    <property type="evidence" value="ECO:0007669"/>
    <property type="project" value="InterPro"/>
</dbReference>
<dbReference type="GO" id="GO:0006096">
    <property type="term" value="P:glycolytic process"/>
    <property type="evidence" value="ECO:0007669"/>
    <property type="project" value="UniProtKB-UniRule"/>
</dbReference>
<dbReference type="GO" id="GO:0030435">
    <property type="term" value="P:sporulation resulting in formation of a cellular spore"/>
    <property type="evidence" value="ECO:0007669"/>
    <property type="project" value="UniProtKB-KW"/>
</dbReference>
<dbReference type="CDD" id="cd16010">
    <property type="entry name" value="iPGM"/>
    <property type="match status" value="1"/>
</dbReference>
<dbReference type="FunFam" id="3.40.1450.10:FF:000001">
    <property type="entry name" value="2,3-bisphosphoglycerate-independent phosphoglycerate mutase"/>
    <property type="match status" value="1"/>
</dbReference>
<dbReference type="FunFam" id="3.40.720.10:FF:000001">
    <property type="entry name" value="2,3-bisphosphoglycerate-independent phosphoglycerate mutase"/>
    <property type="match status" value="1"/>
</dbReference>
<dbReference type="Gene3D" id="3.40.720.10">
    <property type="entry name" value="Alkaline Phosphatase, subunit A"/>
    <property type="match status" value="1"/>
</dbReference>
<dbReference type="Gene3D" id="3.40.1450.10">
    <property type="entry name" value="BPG-independent phosphoglycerate mutase, domain B"/>
    <property type="match status" value="1"/>
</dbReference>
<dbReference type="HAMAP" id="MF_01038">
    <property type="entry name" value="GpmI"/>
    <property type="match status" value="1"/>
</dbReference>
<dbReference type="InterPro" id="IPR017850">
    <property type="entry name" value="Alkaline_phosphatase_core_sf"/>
</dbReference>
<dbReference type="InterPro" id="IPR011258">
    <property type="entry name" value="BPG-indep_PGM_N"/>
</dbReference>
<dbReference type="InterPro" id="IPR006124">
    <property type="entry name" value="Metalloenzyme"/>
</dbReference>
<dbReference type="InterPro" id="IPR036646">
    <property type="entry name" value="PGAM_B_sf"/>
</dbReference>
<dbReference type="InterPro" id="IPR005995">
    <property type="entry name" value="Pgm_bpd_ind"/>
</dbReference>
<dbReference type="NCBIfam" id="TIGR01307">
    <property type="entry name" value="pgm_bpd_ind"/>
    <property type="match status" value="1"/>
</dbReference>
<dbReference type="PANTHER" id="PTHR31637">
    <property type="entry name" value="2,3-BISPHOSPHOGLYCERATE-INDEPENDENT PHOSPHOGLYCERATE MUTASE"/>
    <property type="match status" value="1"/>
</dbReference>
<dbReference type="PANTHER" id="PTHR31637:SF0">
    <property type="entry name" value="2,3-BISPHOSPHOGLYCERATE-INDEPENDENT PHOSPHOGLYCERATE MUTASE"/>
    <property type="match status" value="1"/>
</dbReference>
<dbReference type="Pfam" id="PF06415">
    <property type="entry name" value="iPGM_N"/>
    <property type="match status" value="1"/>
</dbReference>
<dbReference type="Pfam" id="PF01676">
    <property type="entry name" value="Metalloenzyme"/>
    <property type="match status" value="1"/>
</dbReference>
<dbReference type="PIRSF" id="PIRSF001492">
    <property type="entry name" value="IPGAM"/>
    <property type="match status" value="1"/>
</dbReference>
<dbReference type="SUPFAM" id="SSF64158">
    <property type="entry name" value="2,3-Bisphosphoglycerate-independent phosphoglycerate mutase, substrate-binding domain"/>
    <property type="match status" value="1"/>
</dbReference>
<dbReference type="SUPFAM" id="SSF53649">
    <property type="entry name" value="Alkaline phosphatase-like"/>
    <property type="match status" value="1"/>
</dbReference>
<feature type="chain" id="PRO_0000212122" description="2,3-bisphosphoglycerate-independent phosphoglycerate mutase">
    <location>
        <begin position="1"/>
        <end position="509"/>
    </location>
</feature>
<feature type="active site" description="Phosphoserine intermediate" evidence="1">
    <location>
        <position position="61"/>
    </location>
</feature>
<feature type="binding site" evidence="1">
    <location>
        <position position="11"/>
    </location>
    <ligand>
        <name>Mn(2+)</name>
        <dbReference type="ChEBI" id="CHEBI:29035"/>
        <label>2</label>
    </ligand>
</feature>
<feature type="binding site" evidence="1">
    <location>
        <position position="61"/>
    </location>
    <ligand>
        <name>Mn(2+)</name>
        <dbReference type="ChEBI" id="CHEBI:29035"/>
        <label>2</label>
    </ligand>
</feature>
<feature type="binding site" evidence="1">
    <location>
        <position position="122"/>
    </location>
    <ligand>
        <name>substrate</name>
    </ligand>
</feature>
<feature type="binding site" evidence="1">
    <location>
        <begin position="152"/>
        <end position="153"/>
    </location>
    <ligand>
        <name>substrate</name>
    </ligand>
</feature>
<feature type="binding site" evidence="1">
    <location>
        <position position="184"/>
    </location>
    <ligand>
        <name>substrate</name>
    </ligand>
</feature>
<feature type="binding site" evidence="1">
    <location>
        <position position="190"/>
    </location>
    <ligand>
        <name>substrate</name>
    </ligand>
</feature>
<feature type="binding site" evidence="1">
    <location>
        <begin position="260"/>
        <end position="263"/>
    </location>
    <ligand>
        <name>substrate</name>
    </ligand>
</feature>
<feature type="binding site" evidence="1">
    <location>
        <position position="335"/>
    </location>
    <ligand>
        <name>substrate</name>
    </ligand>
</feature>
<feature type="binding site" evidence="1">
    <location>
        <position position="402"/>
    </location>
    <ligand>
        <name>Mn(2+)</name>
        <dbReference type="ChEBI" id="CHEBI:29035"/>
        <label>1</label>
    </ligand>
</feature>
<feature type="binding site" evidence="1">
    <location>
        <position position="406"/>
    </location>
    <ligand>
        <name>Mn(2+)</name>
        <dbReference type="ChEBI" id="CHEBI:29035"/>
        <label>1</label>
    </ligand>
</feature>
<feature type="binding site" evidence="1">
    <location>
        <position position="443"/>
    </location>
    <ligand>
        <name>Mn(2+)</name>
        <dbReference type="ChEBI" id="CHEBI:29035"/>
        <label>2</label>
    </ligand>
</feature>
<feature type="binding site" evidence="1">
    <location>
        <position position="444"/>
    </location>
    <ligand>
        <name>Mn(2+)</name>
        <dbReference type="ChEBI" id="CHEBI:29035"/>
        <label>2</label>
    </ligand>
</feature>
<feature type="binding site" evidence="1">
    <location>
        <position position="461"/>
    </location>
    <ligand>
        <name>Mn(2+)</name>
        <dbReference type="ChEBI" id="CHEBI:29035"/>
        <label>1</label>
    </ligand>
</feature>
<feature type="modified residue" description="Phosphotyrosine" evidence="1">
    <location>
        <position position="35"/>
    </location>
</feature>
<evidence type="ECO:0000255" key="1">
    <source>
        <dbReference type="HAMAP-Rule" id="MF_01038"/>
    </source>
</evidence>
<accession>Q631M1</accession>
<keyword id="KW-0324">Glycolysis</keyword>
<keyword id="KW-0413">Isomerase</keyword>
<keyword id="KW-0464">Manganese</keyword>
<keyword id="KW-0479">Metal-binding</keyword>
<keyword id="KW-0597">Phosphoprotein</keyword>
<keyword id="KW-0749">Sporulation</keyword>
<protein>
    <recommendedName>
        <fullName evidence="1">2,3-bisphosphoglycerate-independent phosphoglycerate mutase</fullName>
        <shortName evidence="1">BPG-independent PGAM</shortName>
        <shortName evidence="1">Phosphoglyceromutase</shortName>
        <shortName evidence="1">iPGM</shortName>
        <ecNumber evidence="1">5.4.2.12</ecNumber>
    </recommendedName>
</protein>
<comment type="function">
    <text evidence="1">Essential for rapid growth and for sporulation. Catalyzes the interconversion of 2-phosphoglycerate and 3-phosphoglycerate.</text>
</comment>
<comment type="catalytic activity">
    <reaction evidence="1">
        <text>(2R)-2-phosphoglycerate = (2R)-3-phosphoglycerate</text>
        <dbReference type="Rhea" id="RHEA:15901"/>
        <dbReference type="ChEBI" id="CHEBI:58272"/>
        <dbReference type="ChEBI" id="CHEBI:58289"/>
        <dbReference type="EC" id="5.4.2.12"/>
    </reaction>
</comment>
<comment type="cofactor">
    <cofactor evidence="1">
        <name>Mn(2+)</name>
        <dbReference type="ChEBI" id="CHEBI:29035"/>
    </cofactor>
    <text evidence="1">Binds 2 manganese ions per subunit.</text>
</comment>
<comment type="pathway">
    <text evidence="1">Carbohydrate degradation; glycolysis; pyruvate from D-glyceraldehyde 3-phosphate: step 3/5.</text>
</comment>
<comment type="subunit">
    <text evidence="1">Monomer.</text>
</comment>
<comment type="similarity">
    <text evidence="1">Belongs to the BPG-independent phosphoglycerate mutase family.</text>
</comment>